<protein>
    <recommendedName>
        <fullName evidence="1">Glycine--tRNA ligase alpha subunit</fullName>
        <ecNumber evidence="1">6.1.1.14</ecNumber>
    </recommendedName>
    <alternativeName>
        <fullName evidence="1">Glycyl-tRNA synthetase alpha subunit</fullName>
        <shortName evidence="1">GlyRS</shortName>
    </alternativeName>
</protein>
<feature type="chain" id="PRO_1000101251" description="Glycine--tRNA ligase alpha subunit">
    <location>
        <begin position="1"/>
        <end position="304"/>
    </location>
</feature>
<evidence type="ECO:0000255" key="1">
    <source>
        <dbReference type="HAMAP-Rule" id="MF_00254"/>
    </source>
</evidence>
<proteinExistence type="inferred from homology"/>
<name>SYGA_YERPY</name>
<accession>B1JH06</accession>
<dbReference type="EC" id="6.1.1.14" evidence="1"/>
<dbReference type="EMBL" id="CP000950">
    <property type="protein sequence ID" value="ACA66336.1"/>
    <property type="molecule type" value="Genomic_DNA"/>
</dbReference>
<dbReference type="RefSeq" id="WP_002209624.1">
    <property type="nucleotide sequence ID" value="NZ_CP009792.1"/>
</dbReference>
<dbReference type="SMR" id="B1JH06"/>
<dbReference type="GeneID" id="96663419"/>
<dbReference type="KEGG" id="ypy:YPK_0022"/>
<dbReference type="PATRIC" id="fig|502800.11.peg.624"/>
<dbReference type="GO" id="GO:0005829">
    <property type="term" value="C:cytosol"/>
    <property type="evidence" value="ECO:0007669"/>
    <property type="project" value="TreeGrafter"/>
</dbReference>
<dbReference type="GO" id="GO:0005524">
    <property type="term" value="F:ATP binding"/>
    <property type="evidence" value="ECO:0007669"/>
    <property type="project" value="UniProtKB-UniRule"/>
</dbReference>
<dbReference type="GO" id="GO:0004820">
    <property type="term" value="F:glycine-tRNA ligase activity"/>
    <property type="evidence" value="ECO:0007669"/>
    <property type="project" value="UniProtKB-UniRule"/>
</dbReference>
<dbReference type="GO" id="GO:0006426">
    <property type="term" value="P:glycyl-tRNA aminoacylation"/>
    <property type="evidence" value="ECO:0007669"/>
    <property type="project" value="UniProtKB-UniRule"/>
</dbReference>
<dbReference type="CDD" id="cd00733">
    <property type="entry name" value="GlyRS_alpha_core"/>
    <property type="match status" value="1"/>
</dbReference>
<dbReference type="FunFam" id="1.20.58.180:FF:000001">
    <property type="entry name" value="Glycine--tRNA ligase alpha subunit"/>
    <property type="match status" value="1"/>
</dbReference>
<dbReference type="FunFam" id="3.30.930.10:FF:000006">
    <property type="entry name" value="Glycine--tRNA ligase alpha subunit"/>
    <property type="match status" value="1"/>
</dbReference>
<dbReference type="Gene3D" id="3.30.930.10">
    <property type="entry name" value="Bira Bifunctional Protein, Domain 2"/>
    <property type="match status" value="1"/>
</dbReference>
<dbReference type="Gene3D" id="1.20.58.180">
    <property type="entry name" value="Class II aaRS and biotin synthetases, domain 2"/>
    <property type="match status" value="1"/>
</dbReference>
<dbReference type="HAMAP" id="MF_00254">
    <property type="entry name" value="Gly_tRNA_synth_alpha"/>
    <property type="match status" value="1"/>
</dbReference>
<dbReference type="InterPro" id="IPR045864">
    <property type="entry name" value="aa-tRNA-synth_II/BPL/LPL"/>
</dbReference>
<dbReference type="InterPro" id="IPR006194">
    <property type="entry name" value="Gly-tRNA-synth_heterodimer"/>
</dbReference>
<dbReference type="InterPro" id="IPR002310">
    <property type="entry name" value="Gly-tRNA_ligase_asu"/>
</dbReference>
<dbReference type="NCBIfam" id="TIGR00388">
    <property type="entry name" value="glyQ"/>
    <property type="match status" value="1"/>
</dbReference>
<dbReference type="NCBIfam" id="NF006827">
    <property type="entry name" value="PRK09348.1"/>
    <property type="match status" value="1"/>
</dbReference>
<dbReference type="PANTHER" id="PTHR30075:SF2">
    <property type="entry name" value="GLYCINE--TRNA LIGASE, CHLOROPLASTIC_MITOCHONDRIAL 2"/>
    <property type="match status" value="1"/>
</dbReference>
<dbReference type="PANTHER" id="PTHR30075">
    <property type="entry name" value="GLYCYL-TRNA SYNTHETASE"/>
    <property type="match status" value="1"/>
</dbReference>
<dbReference type="Pfam" id="PF02091">
    <property type="entry name" value="tRNA-synt_2e"/>
    <property type="match status" value="1"/>
</dbReference>
<dbReference type="PRINTS" id="PR01044">
    <property type="entry name" value="TRNASYNTHGA"/>
</dbReference>
<dbReference type="SUPFAM" id="SSF55681">
    <property type="entry name" value="Class II aaRS and biotin synthetases"/>
    <property type="match status" value="1"/>
</dbReference>
<dbReference type="PROSITE" id="PS50861">
    <property type="entry name" value="AA_TRNA_LIGASE_II_GLYAB"/>
    <property type="match status" value="1"/>
</dbReference>
<reference key="1">
    <citation type="submission" date="2008-02" db="EMBL/GenBank/DDBJ databases">
        <title>Complete sequence of Yersinia pseudotuberculosis YPIII.</title>
        <authorList>
            <consortium name="US DOE Joint Genome Institute"/>
            <person name="Copeland A."/>
            <person name="Lucas S."/>
            <person name="Lapidus A."/>
            <person name="Glavina del Rio T."/>
            <person name="Dalin E."/>
            <person name="Tice H."/>
            <person name="Bruce D."/>
            <person name="Goodwin L."/>
            <person name="Pitluck S."/>
            <person name="Munk A.C."/>
            <person name="Brettin T."/>
            <person name="Detter J.C."/>
            <person name="Han C."/>
            <person name="Tapia R."/>
            <person name="Schmutz J."/>
            <person name="Larimer F."/>
            <person name="Land M."/>
            <person name="Hauser L."/>
            <person name="Challacombe J.F."/>
            <person name="Green L."/>
            <person name="Lindler L.E."/>
            <person name="Nikolich M.P."/>
            <person name="Richardson P."/>
        </authorList>
    </citation>
    <scope>NUCLEOTIDE SEQUENCE [LARGE SCALE GENOMIC DNA]</scope>
    <source>
        <strain>YPIII</strain>
    </source>
</reference>
<organism>
    <name type="scientific">Yersinia pseudotuberculosis serotype O:3 (strain YPIII)</name>
    <dbReference type="NCBI Taxonomy" id="502800"/>
    <lineage>
        <taxon>Bacteria</taxon>
        <taxon>Pseudomonadati</taxon>
        <taxon>Pseudomonadota</taxon>
        <taxon>Gammaproteobacteria</taxon>
        <taxon>Enterobacterales</taxon>
        <taxon>Yersiniaceae</taxon>
        <taxon>Yersinia</taxon>
    </lineage>
</organism>
<comment type="catalytic activity">
    <reaction evidence="1">
        <text>tRNA(Gly) + glycine + ATP = glycyl-tRNA(Gly) + AMP + diphosphate</text>
        <dbReference type="Rhea" id="RHEA:16013"/>
        <dbReference type="Rhea" id="RHEA-COMP:9664"/>
        <dbReference type="Rhea" id="RHEA-COMP:9683"/>
        <dbReference type="ChEBI" id="CHEBI:30616"/>
        <dbReference type="ChEBI" id="CHEBI:33019"/>
        <dbReference type="ChEBI" id="CHEBI:57305"/>
        <dbReference type="ChEBI" id="CHEBI:78442"/>
        <dbReference type="ChEBI" id="CHEBI:78522"/>
        <dbReference type="ChEBI" id="CHEBI:456215"/>
        <dbReference type="EC" id="6.1.1.14"/>
    </reaction>
</comment>
<comment type="subunit">
    <text evidence="1">Tetramer of two alpha and two beta subunits.</text>
</comment>
<comment type="subcellular location">
    <subcellularLocation>
        <location evidence="1">Cytoplasm</location>
    </subcellularLocation>
</comment>
<comment type="similarity">
    <text evidence="1">Belongs to the class-II aminoacyl-tRNA synthetase family.</text>
</comment>
<gene>
    <name evidence="1" type="primary">glyQ</name>
    <name type="ordered locus">YPK_0022</name>
</gene>
<sequence>MQKFDTKTFQGLILTLQDYWARQGCTIVQPLDMEVGAGTSHPMTCLRAIGPEPIAAAYVQPSRRPTDGRYGENPNRLQHYYQFQVIIKPSPDNIQELYLGSLKELGLDPTIHDIRFVEDNWENPTLGAWGLGWEVWLNGMEVTQFTYFQQVGGLECKPVTGEITYGLERLAMYIQGVDSVYDLIWCDGPLGTTTYGDIYHQNEVEQSTYNFEYADVDFLFSCFEQYEKEAQSLLALETPLPLPAYERILKAGHTFNLLDARKAISVTERQRYILRIRTLTKAVAEAYYASREALGFPMCKKNQN</sequence>
<keyword id="KW-0030">Aminoacyl-tRNA synthetase</keyword>
<keyword id="KW-0067">ATP-binding</keyword>
<keyword id="KW-0963">Cytoplasm</keyword>
<keyword id="KW-0436">Ligase</keyword>
<keyword id="KW-0547">Nucleotide-binding</keyword>
<keyword id="KW-0648">Protein biosynthesis</keyword>